<keyword id="KW-0007">Acetylation</keyword>
<keyword id="KW-0479">Metal-binding</keyword>
<keyword id="KW-0507">mRNA processing</keyword>
<keyword id="KW-0508">mRNA splicing</keyword>
<keyword id="KW-0539">Nucleus</keyword>
<keyword id="KW-0597">Phosphoprotein</keyword>
<keyword id="KW-1185">Reference proteome</keyword>
<keyword id="KW-0677">Repeat</keyword>
<keyword id="KW-0747">Spliceosome</keyword>
<keyword id="KW-0862">Zinc</keyword>
<keyword id="KW-0863">Zinc-finger</keyword>
<reference key="1">
    <citation type="journal article" date="2004" name="Genome Res.">
        <title>The status, quality, and expansion of the NIH full-length cDNA project: the Mammalian Gene Collection (MGC).</title>
        <authorList>
            <consortium name="The MGC Project Team"/>
        </authorList>
    </citation>
    <scope>NUCLEOTIDE SEQUENCE [LARGE SCALE MRNA]</scope>
    <source>
        <tissue>Testis</tissue>
    </source>
</reference>
<gene>
    <name type="primary">Sf3a2</name>
</gene>
<accession>Q6AXT8</accession>
<organism>
    <name type="scientific">Rattus norvegicus</name>
    <name type="common">Rat</name>
    <dbReference type="NCBI Taxonomy" id="10116"/>
    <lineage>
        <taxon>Eukaryota</taxon>
        <taxon>Metazoa</taxon>
        <taxon>Chordata</taxon>
        <taxon>Craniata</taxon>
        <taxon>Vertebrata</taxon>
        <taxon>Euteleostomi</taxon>
        <taxon>Mammalia</taxon>
        <taxon>Eutheria</taxon>
        <taxon>Euarchontoglires</taxon>
        <taxon>Glires</taxon>
        <taxon>Rodentia</taxon>
        <taxon>Myomorpha</taxon>
        <taxon>Muroidea</taxon>
        <taxon>Muridae</taxon>
        <taxon>Murinae</taxon>
        <taxon>Rattus</taxon>
    </lineage>
</organism>
<comment type="function">
    <text evidence="1">Component of the 17S U2 SnRNP complex of the spliceosome, a large ribonucleoprotein complex that removes introns from transcribed pre-mRNAs. The 17S U2 SnRNP complex (1) directly participates in early spliceosome assembly and (2) mediates recognition of the intron branch site during pre-mRNA splicing by promoting the selection of the pre-mRNA branch-site adenosine, the nucleophile for the first step of splicing. Within the 17S U2 SnRNP complex, SF3A2 is part of the SF3A subcomplex that contributes to the assembly of the 17S U2 snRNP, and the subsequent assembly of the pre-spliceosome 'E' complex and the pre-catalytic spliceosome 'A' complex. Involved in pre-mRNA splicing as a component of pre-catalytic spliceosome 'B' complexes, including the Bact complex. Interacts directly with the duplex formed by U2 snRNA and the intron.</text>
</comment>
<comment type="subunit">
    <text evidence="1">Component of the 17S U2 SnRNP complex, a ribonucleoprotein complex that contains small nuclear RNA (snRNA) U2 and a number of specific proteins. Part of the SF3A subcomplex of the 17S U2 SnRNP complex which is composed of three subunits; SF3A3/SAP61, SF3A2/SAP62 and SF3A1/SAP114. SF3A associates with the splicing factor SF3B and a 12S RNA unit to form the mature 17S U2 small nuclear ribonucleoprotein complex (17S U2 snRNP). Identified in the spliceosome 'E' complex, a precursor of the spliceosome 'A' complex. Identified in the spliceosome 'A' and 'B' complexes. Identified in the spliceosome 'C' complex. Interacts with HTATSF1.</text>
</comment>
<comment type="subcellular location">
    <subcellularLocation>
        <location evidence="3">Nucleus</location>
    </subcellularLocation>
</comment>
<comment type="similarity">
    <text evidence="5">Belongs to the SF3A2 family.</text>
</comment>
<feature type="chain" id="PRO_0000326552" description="Splicing factor 3A subunit 2">
    <location>
        <begin position="1"/>
        <end position="471"/>
    </location>
</feature>
<feature type="zinc finger region" description="Matrin-type" evidence="3">
    <location>
        <begin position="54"/>
        <end position="84"/>
    </location>
</feature>
<feature type="region of interest" description="Disordered" evidence="4">
    <location>
        <begin position="1"/>
        <end position="27"/>
    </location>
</feature>
<feature type="region of interest" description="Disordered" evidence="4">
    <location>
        <begin position="217"/>
        <end position="471"/>
    </location>
</feature>
<feature type="compositionally biased region" description="Pro residues" evidence="4">
    <location>
        <begin position="217"/>
        <end position="295"/>
    </location>
</feature>
<feature type="compositionally biased region" description="Pro residues" evidence="4">
    <location>
        <begin position="303"/>
        <end position="316"/>
    </location>
</feature>
<feature type="compositionally biased region" description="Pro residues" evidence="4">
    <location>
        <begin position="324"/>
        <end position="383"/>
    </location>
</feature>
<feature type="compositionally biased region" description="Pro residues" evidence="4">
    <location>
        <begin position="437"/>
        <end position="471"/>
    </location>
</feature>
<feature type="modified residue" description="N-acetylmethionine" evidence="1">
    <location>
        <position position="1"/>
    </location>
</feature>
<feature type="modified residue" description="N6-acetyllysine" evidence="2">
    <location>
        <position position="10"/>
    </location>
</feature>
<feature type="modified residue" description="Phosphoserine" evidence="1">
    <location>
        <position position="153"/>
    </location>
</feature>
<name>SF3A2_RAT</name>
<dbReference type="EMBL" id="BC079320">
    <property type="protein sequence ID" value="AAH79320.1"/>
    <property type="molecule type" value="mRNA"/>
</dbReference>
<dbReference type="RefSeq" id="NP_001011986.1">
    <property type="nucleotide sequence ID" value="NM_001011986.1"/>
</dbReference>
<dbReference type="RefSeq" id="XP_006240947.1">
    <property type="nucleotide sequence ID" value="XM_006240885.3"/>
</dbReference>
<dbReference type="RefSeq" id="XP_006240948.1">
    <property type="nucleotide sequence ID" value="XM_006240886.2"/>
</dbReference>
<dbReference type="RefSeq" id="XP_017450207.1">
    <property type="nucleotide sequence ID" value="XM_017594718.1"/>
</dbReference>
<dbReference type="SMR" id="Q6AXT8"/>
<dbReference type="FunCoup" id="Q6AXT8">
    <property type="interactions" value="2230"/>
</dbReference>
<dbReference type="STRING" id="10116.ENSRNOP00000026202"/>
<dbReference type="GlyGen" id="Q6AXT8">
    <property type="glycosylation" value="1 site"/>
</dbReference>
<dbReference type="PhosphoSitePlus" id="Q6AXT8"/>
<dbReference type="jPOST" id="Q6AXT8"/>
<dbReference type="PaxDb" id="10116-ENSRNOP00000026202"/>
<dbReference type="Ensembl" id="ENSRNOT00000026202.4">
    <property type="protein sequence ID" value="ENSRNOP00000026202.2"/>
    <property type="gene ID" value="ENSRNOG00000019349.4"/>
</dbReference>
<dbReference type="GeneID" id="299620"/>
<dbReference type="KEGG" id="rno:299620"/>
<dbReference type="UCSC" id="RGD:1308627">
    <property type="organism name" value="rat"/>
</dbReference>
<dbReference type="AGR" id="RGD:1308627"/>
<dbReference type="CTD" id="8175"/>
<dbReference type="RGD" id="1308627">
    <property type="gene designation" value="Sf3a2"/>
</dbReference>
<dbReference type="eggNOG" id="KOG0227">
    <property type="taxonomic scope" value="Eukaryota"/>
</dbReference>
<dbReference type="GeneTree" id="ENSGT00720000108823"/>
<dbReference type="HOGENOM" id="CLU_050757_1_1_1"/>
<dbReference type="InParanoid" id="Q6AXT8"/>
<dbReference type="OMA" id="MAPPHGM"/>
<dbReference type="OrthoDB" id="10250970at2759"/>
<dbReference type="TreeFam" id="TF314370"/>
<dbReference type="Reactome" id="R-RNO-72163">
    <property type="pathway name" value="mRNA Splicing - Major Pathway"/>
</dbReference>
<dbReference type="PRO" id="PR:Q6AXT8"/>
<dbReference type="Proteomes" id="UP000002494">
    <property type="component" value="Chromosome 7"/>
</dbReference>
<dbReference type="Bgee" id="ENSRNOG00000019349">
    <property type="expression patterns" value="Expressed in testis and 18 other cell types or tissues"/>
</dbReference>
<dbReference type="GO" id="GO:0071013">
    <property type="term" value="C:catalytic step 2 spliceosome"/>
    <property type="evidence" value="ECO:0000266"/>
    <property type="project" value="RGD"/>
</dbReference>
<dbReference type="GO" id="GO:0016607">
    <property type="term" value="C:nuclear speck"/>
    <property type="evidence" value="ECO:0000314"/>
    <property type="project" value="RGD"/>
</dbReference>
<dbReference type="GO" id="GO:0005634">
    <property type="term" value="C:nucleus"/>
    <property type="evidence" value="ECO:0000266"/>
    <property type="project" value="RGD"/>
</dbReference>
<dbReference type="GO" id="GO:0005681">
    <property type="term" value="C:spliceosomal complex"/>
    <property type="evidence" value="ECO:0000266"/>
    <property type="project" value="RGD"/>
</dbReference>
<dbReference type="GO" id="GO:0005686">
    <property type="term" value="C:U2 snRNP"/>
    <property type="evidence" value="ECO:0000250"/>
    <property type="project" value="UniProtKB"/>
</dbReference>
<dbReference type="GO" id="GO:0071005">
    <property type="term" value="C:U2-type precatalytic spliceosome"/>
    <property type="evidence" value="ECO:0000250"/>
    <property type="project" value="UniProtKB"/>
</dbReference>
<dbReference type="GO" id="GO:0071004">
    <property type="term" value="C:U2-type prespliceosome"/>
    <property type="evidence" value="ECO:0000318"/>
    <property type="project" value="GO_Central"/>
</dbReference>
<dbReference type="GO" id="GO:0005684">
    <property type="term" value="C:U2-type spliceosomal complex"/>
    <property type="evidence" value="ECO:0000266"/>
    <property type="project" value="RGD"/>
</dbReference>
<dbReference type="GO" id="GO:0003676">
    <property type="term" value="F:nucleic acid binding"/>
    <property type="evidence" value="ECO:0007669"/>
    <property type="project" value="InterPro"/>
</dbReference>
<dbReference type="GO" id="GO:0008270">
    <property type="term" value="F:zinc ion binding"/>
    <property type="evidence" value="ECO:0007669"/>
    <property type="project" value="UniProtKB-KW"/>
</dbReference>
<dbReference type="GO" id="GO:0006397">
    <property type="term" value="P:mRNA processing"/>
    <property type="evidence" value="ECO:0000266"/>
    <property type="project" value="RGD"/>
</dbReference>
<dbReference type="GO" id="GO:0000398">
    <property type="term" value="P:mRNA splicing, via spliceosome"/>
    <property type="evidence" value="ECO:0000250"/>
    <property type="project" value="UniProtKB"/>
</dbReference>
<dbReference type="GO" id="GO:0010976">
    <property type="term" value="P:positive regulation of neuron projection development"/>
    <property type="evidence" value="ECO:0000314"/>
    <property type="project" value="RGD"/>
</dbReference>
<dbReference type="GO" id="GO:0000245">
    <property type="term" value="P:spliceosomal complex assembly"/>
    <property type="evidence" value="ECO:0000318"/>
    <property type="project" value="GO_Central"/>
</dbReference>
<dbReference type="GO" id="GO:1903241">
    <property type="term" value="P:U2-type prespliceosome assembly"/>
    <property type="evidence" value="ECO:0000250"/>
    <property type="project" value="UniProtKB"/>
</dbReference>
<dbReference type="FunFam" id="3.30.160.60:FF:001216">
    <property type="entry name" value="Splicing factor 3A subunit 2"/>
    <property type="match status" value="1"/>
</dbReference>
<dbReference type="FunFam" id="2.60.40.2690:FF:000001">
    <property type="entry name" value="Splicing factor 3a, subunit 2"/>
    <property type="match status" value="1"/>
</dbReference>
<dbReference type="Gene3D" id="2.60.40.2690">
    <property type="match status" value="1"/>
</dbReference>
<dbReference type="InterPro" id="IPR000690">
    <property type="entry name" value="Matrin/U1-C_Znf_C2H2"/>
</dbReference>
<dbReference type="InterPro" id="IPR003604">
    <property type="entry name" value="Matrin/U1-like-C_Znf_C2H2"/>
</dbReference>
<dbReference type="InterPro" id="IPR052092">
    <property type="entry name" value="SF3A2"/>
</dbReference>
<dbReference type="InterPro" id="IPR031781">
    <property type="entry name" value="SF3A2_dom"/>
</dbReference>
<dbReference type="InterPro" id="IPR036236">
    <property type="entry name" value="Znf_C2H2_sf"/>
</dbReference>
<dbReference type="InterPro" id="IPR013087">
    <property type="entry name" value="Znf_C2H2_type"/>
</dbReference>
<dbReference type="PANTHER" id="PTHR23205">
    <property type="entry name" value="SPLICING FACTOR 3A SUBUNIT 2"/>
    <property type="match status" value="1"/>
</dbReference>
<dbReference type="PANTHER" id="PTHR23205:SF0">
    <property type="entry name" value="SPLICING FACTOR 3A SUBUNIT 2"/>
    <property type="match status" value="1"/>
</dbReference>
<dbReference type="Pfam" id="PF16835">
    <property type="entry name" value="SF3A2"/>
    <property type="match status" value="1"/>
</dbReference>
<dbReference type="Pfam" id="PF12874">
    <property type="entry name" value="zf-met"/>
    <property type="match status" value="1"/>
</dbReference>
<dbReference type="SMART" id="SM01050">
    <property type="entry name" value="CactinC_cactus"/>
    <property type="match status" value="1"/>
</dbReference>
<dbReference type="SMART" id="SM00451">
    <property type="entry name" value="ZnF_U1"/>
    <property type="match status" value="1"/>
</dbReference>
<dbReference type="SUPFAM" id="SSF57667">
    <property type="entry name" value="beta-beta-alpha zinc fingers"/>
    <property type="match status" value="1"/>
</dbReference>
<dbReference type="PROSITE" id="PS50171">
    <property type="entry name" value="ZF_MATRIN"/>
    <property type="match status" value="1"/>
</dbReference>
<protein>
    <recommendedName>
        <fullName>Splicing factor 3A subunit 2</fullName>
    </recommendedName>
</protein>
<sequence>MDFQHRPGGKTGSGGVASSSESNRDRRERLRQLALETIDINKDPYFMKNHLGSYECKLCLTLHNNEGSYLAHTQGKKHQTNLARRAAKEAKEAPAQPAPEKVKVEVKKFVKIGRPGYKVTKQRDTEMGQQSLLFQIDYPEIAEGVMPRHRFMSAYEQRIEPPDRRWQYLLMAAEPYETIAFKVPSREIDKAEGKFWTHWNRETKQFFLQFHFKMEKPPAPPSLPAGPPGVKRPPPPLMNGLPPRPPLPDALPPPPPGGLPLPPMPPTGPAPSGPPGPPQMPPPAPGVHPPAPVVHPPTSGVHPPAPGVHPPAPVVHPPTSGVHPPAPGVHPPAPGVHPPAPGVHPPAPGVHPPAPGVHPPAPGVHPPAPGVHPPAPGVHPPPSAGVHPQAPGVHPPAPAVHPQAPGVHPPAPGIHPQAPGVHPQPPPGVHPAAPGVHPQPPGVHPTPMPPMLRPPLPSDGPGNMPPPPPGN</sequence>
<evidence type="ECO:0000250" key="1">
    <source>
        <dbReference type="UniProtKB" id="Q15428"/>
    </source>
</evidence>
<evidence type="ECO:0000250" key="2">
    <source>
        <dbReference type="UniProtKB" id="Q62203"/>
    </source>
</evidence>
<evidence type="ECO:0000255" key="3">
    <source>
        <dbReference type="PROSITE-ProRule" id="PRU00130"/>
    </source>
</evidence>
<evidence type="ECO:0000256" key="4">
    <source>
        <dbReference type="SAM" id="MobiDB-lite"/>
    </source>
</evidence>
<evidence type="ECO:0000305" key="5"/>
<proteinExistence type="evidence at transcript level"/>